<reference key="1">
    <citation type="journal article" date="2002" name="Nucleic Acids Res.">
        <title>Genome sequence of Shigella flexneri 2a: insights into pathogenicity through comparison with genomes of Escherichia coli K12 and O157.</title>
        <authorList>
            <person name="Jin Q."/>
            <person name="Yuan Z."/>
            <person name="Xu J."/>
            <person name="Wang Y."/>
            <person name="Shen Y."/>
            <person name="Lu W."/>
            <person name="Wang J."/>
            <person name="Liu H."/>
            <person name="Yang J."/>
            <person name="Yang F."/>
            <person name="Zhang X."/>
            <person name="Zhang J."/>
            <person name="Yang G."/>
            <person name="Wu H."/>
            <person name="Qu D."/>
            <person name="Dong J."/>
            <person name="Sun L."/>
            <person name="Xue Y."/>
            <person name="Zhao A."/>
            <person name="Gao Y."/>
            <person name="Zhu J."/>
            <person name="Kan B."/>
            <person name="Ding K."/>
            <person name="Chen S."/>
            <person name="Cheng H."/>
            <person name="Yao Z."/>
            <person name="He B."/>
            <person name="Chen R."/>
            <person name="Ma D."/>
            <person name="Qiang B."/>
            <person name="Wen Y."/>
            <person name="Hou Y."/>
            <person name="Yu J."/>
        </authorList>
    </citation>
    <scope>NUCLEOTIDE SEQUENCE [LARGE SCALE GENOMIC DNA]</scope>
    <source>
        <strain>301 / Serotype 2a</strain>
    </source>
</reference>
<reference key="2">
    <citation type="journal article" date="2003" name="Infect. Immun.">
        <title>Complete genome sequence and comparative genomics of Shigella flexneri serotype 2a strain 2457T.</title>
        <authorList>
            <person name="Wei J."/>
            <person name="Goldberg M.B."/>
            <person name="Burland V."/>
            <person name="Venkatesan M.M."/>
            <person name="Deng W."/>
            <person name="Fournier G."/>
            <person name="Mayhew G.F."/>
            <person name="Plunkett G. III"/>
            <person name="Rose D.J."/>
            <person name="Darling A."/>
            <person name="Mau B."/>
            <person name="Perna N.T."/>
            <person name="Payne S.M."/>
            <person name="Runyen-Janecky L.J."/>
            <person name="Zhou S."/>
            <person name="Schwartz D.C."/>
            <person name="Blattner F.R."/>
        </authorList>
    </citation>
    <scope>NUCLEOTIDE SEQUENCE [LARGE SCALE GENOMIC DNA]</scope>
    <source>
        <strain>ATCC 700930 / 2457T / Serotype 2a</strain>
    </source>
</reference>
<dbReference type="EMBL" id="AE005674">
    <property type="protein sequence ID" value="AAN43289.1"/>
    <property type="molecule type" value="Genomic_DNA"/>
</dbReference>
<dbReference type="EMBL" id="AE014073">
    <property type="protein sequence ID" value="AAP17177.1"/>
    <property type="molecule type" value="Genomic_DNA"/>
</dbReference>
<dbReference type="RefSeq" id="WP_000089366.1">
    <property type="nucleotide sequence ID" value="NZ_CP123365.1"/>
</dbReference>
<dbReference type="SMR" id="Q83KW2"/>
<dbReference type="STRING" id="198214.SF1713"/>
<dbReference type="PaxDb" id="198214-SF1713"/>
<dbReference type="KEGG" id="sfl:SF1713"/>
<dbReference type="KEGG" id="sfx:S1845"/>
<dbReference type="PATRIC" id="fig|198214.7.peg.2027"/>
<dbReference type="HOGENOM" id="CLU_026231_0_0_6"/>
<dbReference type="Proteomes" id="UP000001006">
    <property type="component" value="Chromosome"/>
</dbReference>
<dbReference type="Proteomes" id="UP000002673">
    <property type="component" value="Chromosome"/>
</dbReference>
<dbReference type="GO" id="GO:0016226">
    <property type="term" value="P:iron-sulfur cluster assembly"/>
    <property type="evidence" value="ECO:0007669"/>
    <property type="project" value="InterPro"/>
</dbReference>
<dbReference type="InterPro" id="IPR055346">
    <property type="entry name" value="Fe-S_cluster_assembly_SufBD"/>
</dbReference>
<dbReference type="InterPro" id="IPR010231">
    <property type="entry name" value="SUF_FeS_clus_asmbl_SufB"/>
</dbReference>
<dbReference type="InterPro" id="IPR000825">
    <property type="entry name" value="SUF_FeS_clus_asmbl_SufBD_core"/>
</dbReference>
<dbReference type="InterPro" id="IPR037284">
    <property type="entry name" value="SUF_FeS_clus_asmbl_SufBD_sf"/>
</dbReference>
<dbReference type="InterPro" id="IPR045595">
    <property type="entry name" value="SufBD_N"/>
</dbReference>
<dbReference type="NCBIfam" id="NF008773">
    <property type="entry name" value="PRK11814.1"/>
    <property type="match status" value="1"/>
</dbReference>
<dbReference type="NCBIfam" id="TIGR01980">
    <property type="entry name" value="sufB"/>
    <property type="match status" value="1"/>
</dbReference>
<dbReference type="PANTHER" id="PTHR30508">
    <property type="entry name" value="FES CLUSTER ASSEMBLY PROTEIN SUF"/>
    <property type="match status" value="1"/>
</dbReference>
<dbReference type="PANTHER" id="PTHR30508:SF1">
    <property type="entry name" value="UPF0051 PROTEIN ABCI8, CHLOROPLASTIC-RELATED"/>
    <property type="match status" value="1"/>
</dbReference>
<dbReference type="Pfam" id="PF01458">
    <property type="entry name" value="SUFBD_core"/>
    <property type="match status" value="1"/>
</dbReference>
<dbReference type="Pfam" id="PF19295">
    <property type="entry name" value="SufBD_N"/>
    <property type="match status" value="1"/>
</dbReference>
<dbReference type="SUPFAM" id="SSF101960">
    <property type="entry name" value="Stabilizer of iron transporter SufD"/>
    <property type="match status" value="1"/>
</dbReference>
<protein>
    <recommendedName>
        <fullName>Iron-sulfur cluster assembly protein SufB</fullName>
    </recommendedName>
</protein>
<proteinExistence type="inferred from homology"/>
<accession>Q83KW2</accession>
<evidence type="ECO:0000250" key="1"/>
<evidence type="ECO:0000305" key="2"/>
<gene>
    <name type="primary">sufB</name>
    <name type="ordered locus">SF1713</name>
    <name type="ordered locus">S1845</name>
</gene>
<sequence>MSRNTEATDDVKTWTGGPLNYKEGFFTQLATDELAKGINEEVVRAISAKRNEPEWMLEFRLNAYRAWLEMEEPHWLKAHYDKLNYQDYSYYSAPSCGNCDDTCASEPGAVQQTGANAFLSKEVEAAFEQLGVPVREGKEVAVDAIFDSVSVATTYREKLAEQGIIFCSFGEAIHDHTELVRKYLGTVVPGNDNFFAALNAAVASDGTFIYVPKGVRCPMELSTYFRINAEKTGQFERTILVADEDSYVSYIEGCSAPVRDSYQLHAAVVEVIIHKNAEVKYSTVQNWFPGDNNTGGILNFVTKRALCEGENSKMSWTQSETGSAITWKYPSCILRGDNSIGEFYSVALTSGHQQADTGTKMIHIGKNTKSTIISKGISAGHSQNSYRGLVKIMPTATNARNFTQCDSMLIGANCGAHTFPYVECRNNSAQLEHEATTSRIGEDQLFYCLQRGISEEDAISMIVNGFCKDVFSELPLEFAVEAQKLLAISLEHSVG</sequence>
<keyword id="KW-1185">Reference proteome</keyword>
<name>SUFB_SHIFL</name>
<feature type="chain" id="PRO_0000147374" description="Iron-sulfur cluster assembly protein SufB">
    <location>
        <begin position="1"/>
        <end position="495"/>
    </location>
</feature>
<feature type="sequence conflict" description="In Ref. 2; AAP17177." evidence="2" ref="2">
    <original>T</original>
    <variation>P</variation>
    <location>
        <position position="177"/>
    </location>
</feature>
<comment type="function">
    <text evidence="1">The SufBCD complex acts synergistically with SufE to stimulate the cysteine desulfurase activity of SufS. The SufBCD complex contributes to the assembly or repair of oxygen-labile iron-sulfur clusters under oxidative stress. May facilitate iron uptake from extracellular iron chelators under iron limitation (By similarity).</text>
</comment>
<comment type="subunit">
    <text evidence="1">Part of the SufBCD complex that contains SufB, SufC and SufD.</text>
</comment>
<comment type="similarity">
    <text evidence="2">Belongs to the iron-sulfur cluster assembly SufBD family.</text>
</comment>
<organism>
    <name type="scientific">Shigella flexneri</name>
    <dbReference type="NCBI Taxonomy" id="623"/>
    <lineage>
        <taxon>Bacteria</taxon>
        <taxon>Pseudomonadati</taxon>
        <taxon>Pseudomonadota</taxon>
        <taxon>Gammaproteobacteria</taxon>
        <taxon>Enterobacterales</taxon>
        <taxon>Enterobacteriaceae</taxon>
        <taxon>Shigella</taxon>
    </lineage>
</organism>